<evidence type="ECO:0000250" key="1">
    <source>
        <dbReference type="UniProtKB" id="P68183"/>
    </source>
</evidence>
<evidence type="ECO:0000255" key="2"/>
<evidence type="ECO:0000255" key="3">
    <source>
        <dbReference type="PROSITE-ProRule" id="PRU00441"/>
    </source>
</evidence>
<evidence type="ECO:0000305" key="4"/>
<keyword id="KW-0997">Cell inner membrane</keyword>
<keyword id="KW-1003">Cell membrane</keyword>
<keyword id="KW-0472">Membrane</keyword>
<keyword id="KW-1185">Reference proteome</keyword>
<keyword id="KW-0762">Sugar transport</keyword>
<keyword id="KW-0812">Transmembrane</keyword>
<keyword id="KW-1133">Transmembrane helix</keyword>
<keyword id="KW-0813">Transport</keyword>
<dbReference type="EMBL" id="X54292">
    <property type="protein sequence ID" value="CAA38191.1"/>
    <property type="molecule type" value="Genomic_DNA"/>
</dbReference>
<dbReference type="EMBL" id="M33921">
    <property type="protein sequence ID" value="AAA27160.1"/>
    <property type="molecule type" value="Genomic_DNA"/>
</dbReference>
<dbReference type="EMBL" id="AE006468">
    <property type="protein sequence ID" value="AAL23051.1"/>
    <property type="molecule type" value="Genomic_DNA"/>
</dbReference>
<dbReference type="PIR" id="A60175">
    <property type="entry name" value="A60175"/>
</dbReference>
<dbReference type="RefSeq" id="NP_463092.1">
    <property type="nucleotide sequence ID" value="NC_003197.2"/>
</dbReference>
<dbReference type="RefSeq" id="WP_001252085.1">
    <property type="nucleotide sequence ID" value="NC_003197.2"/>
</dbReference>
<dbReference type="SMR" id="P26468"/>
<dbReference type="STRING" id="99287.STM4227"/>
<dbReference type="PaxDb" id="99287-STM4227"/>
<dbReference type="GeneID" id="1255753"/>
<dbReference type="KEGG" id="stm:STM4227"/>
<dbReference type="PATRIC" id="fig|99287.12.peg.4447"/>
<dbReference type="HOGENOM" id="CLU_016047_1_2_6"/>
<dbReference type="OMA" id="QMFPIAV"/>
<dbReference type="PhylomeDB" id="P26468"/>
<dbReference type="BioCyc" id="SENT99287:STM4227-MONOMER"/>
<dbReference type="Proteomes" id="UP000001014">
    <property type="component" value="Chromosome"/>
</dbReference>
<dbReference type="GO" id="GO:0005886">
    <property type="term" value="C:plasma membrane"/>
    <property type="evidence" value="ECO:0007669"/>
    <property type="project" value="UniProtKB-SubCell"/>
</dbReference>
<dbReference type="GO" id="GO:0015423">
    <property type="term" value="F:ABC-type maltose transporter activity"/>
    <property type="evidence" value="ECO:0000318"/>
    <property type="project" value="GO_Central"/>
</dbReference>
<dbReference type="GO" id="GO:0042956">
    <property type="term" value="P:maltodextrin transmembrane transport"/>
    <property type="evidence" value="ECO:0000318"/>
    <property type="project" value="GO_Central"/>
</dbReference>
<dbReference type="GO" id="GO:0015768">
    <property type="term" value="P:maltose transport"/>
    <property type="evidence" value="ECO:0000318"/>
    <property type="project" value="GO_Central"/>
</dbReference>
<dbReference type="CDD" id="cd06261">
    <property type="entry name" value="TM_PBP2"/>
    <property type="match status" value="1"/>
</dbReference>
<dbReference type="FunFam" id="1.10.3720.10:FF:000010">
    <property type="entry name" value="Maltose ABC transporter permease MalG"/>
    <property type="match status" value="1"/>
</dbReference>
<dbReference type="Gene3D" id="1.10.3720.10">
    <property type="entry name" value="MetI-like"/>
    <property type="match status" value="1"/>
</dbReference>
<dbReference type="InterPro" id="IPR050901">
    <property type="entry name" value="BP-dep_ABC_trans_perm"/>
</dbReference>
<dbReference type="InterPro" id="IPR000515">
    <property type="entry name" value="MetI-like"/>
</dbReference>
<dbReference type="InterPro" id="IPR035906">
    <property type="entry name" value="MetI-like_sf"/>
</dbReference>
<dbReference type="NCBIfam" id="NF008231">
    <property type="entry name" value="PRK10998.1"/>
    <property type="match status" value="1"/>
</dbReference>
<dbReference type="PANTHER" id="PTHR32243">
    <property type="entry name" value="MALTOSE TRANSPORT SYSTEM PERMEASE-RELATED"/>
    <property type="match status" value="1"/>
</dbReference>
<dbReference type="PANTHER" id="PTHR32243:SF50">
    <property type="entry name" value="MALTOSE_MALTODEXTRIN TRANSPORT SYSTEM PERMEASE PROTEIN MALG"/>
    <property type="match status" value="1"/>
</dbReference>
<dbReference type="Pfam" id="PF00528">
    <property type="entry name" value="BPD_transp_1"/>
    <property type="match status" value="1"/>
</dbReference>
<dbReference type="SUPFAM" id="SSF161098">
    <property type="entry name" value="MetI-like"/>
    <property type="match status" value="1"/>
</dbReference>
<dbReference type="PROSITE" id="PS50928">
    <property type="entry name" value="ABC_TM1"/>
    <property type="match status" value="1"/>
</dbReference>
<reference key="1">
    <citation type="journal article" date="1992" name="Biochim. Biophys. Acta">
        <title>Completion of the nucleotide sequence of the 'maltose B' region in Salmonella typhimurium: the high conservation of the malM gene suggests a selected physiological role for its product.</title>
        <authorList>
            <person name="Schneider E."/>
            <person name="Francoz E."/>
            <person name="Dassa E."/>
        </authorList>
    </citation>
    <scope>NUCLEOTIDE SEQUENCE [GENOMIC DNA]</scope>
    <source>
        <strain>LT2</strain>
    </source>
</reference>
<reference key="2">
    <citation type="journal article" date="1990" name="Res. Microbiol.">
        <title>The sequence of the malG gene from Salmonella typhimurium and its functional implications.</title>
        <authorList>
            <person name="Francoz E."/>
            <person name="Schneider E."/>
            <person name="Dassa E."/>
        </authorList>
    </citation>
    <scope>NUCLEOTIDE SEQUENCE [GENOMIC DNA]</scope>
</reference>
<reference key="3">
    <citation type="journal article" date="2001" name="Nature">
        <title>Complete genome sequence of Salmonella enterica serovar Typhimurium LT2.</title>
        <authorList>
            <person name="McClelland M."/>
            <person name="Sanderson K.E."/>
            <person name="Spieth J."/>
            <person name="Clifton S.W."/>
            <person name="Latreille P."/>
            <person name="Courtney L."/>
            <person name="Porwollik S."/>
            <person name="Ali J."/>
            <person name="Dante M."/>
            <person name="Du F."/>
            <person name="Hou S."/>
            <person name="Layman D."/>
            <person name="Leonard S."/>
            <person name="Nguyen C."/>
            <person name="Scott K."/>
            <person name="Holmes A."/>
            <person name="Grewal N."/>
            <person name="Mulvaney E."/>
            <person name="Ryan E."/>
            <person name="Sun H."/>
            <person name="Florea L."/>
            <person name="Miller W."/>
            <person name="Stoneking T."/>
            <person name="Nhan M."/>
            <person name="Waterston R."/>
            <person name="Wilson R.K."/>
        </authorList>
    </citation>
    <scope>NUCLEOTIDE SEQUENCE [LARGE SCALE GENOMIC DNA]</scope>
    <source>
        <strain>LT2 / SGSC1412 / ATCC 700720</strain>
    </source>
</reference>
<name>MALG_SALTY</name>
<proteinExistence type="inferred from homology"/>
<accession>P26468</accession>
<sequence>MAMVQPKSQKLRLLITHLGLLIFIAAIMFPLLMVIAISLREGNFATGSLIPDKISWEHWRLALGFSVEHADGRVTPPPFPVLLWLWNSVKIAGITAIGIVALSTTCAYAFARMRFPGKATLLKGMLIFQMFPAVLSLVALYALFDRLGQYIPFIGLNTHGGVIFAYLGGIALHVWTIKGYFETIDSSLEEAAALDGATPWQAFRLVLLPLSVPILAVVFILSFIAAITEVPVASLLLRDVDSYTLAVGMQQYLNPQNYLWGDFAAAAVLSAIPITLVFLLAQRWLVNGLTAGGVKG</sequence>
<organism>
    <name type="scientific">Salmonella typhimurium (strain LT2 / SGSC1412 / ATCC 700720)</name>
    <dbReference type="NCBI Taxonomy" id="99287"/>
    <lineage>
        <taxon>Bacteria</taxon>
        <taxon>Pseudomonadati</taxon>
        <taxon>Pseudomonadota</taxon>
        <taxon>Gammaproteobacteria</taxon>
        <taxon>Enterobacterales</taxon>
        <taxon>Enterobacteriaceae</taxon>
        <taxon>Salmonella</taxon>
    </lineage>
</organism>
<comment type="function">
    <text evidence="1">Part of the ABC transporter complex MalEFGK involved in maltose/maltodextrin import. Probably responsible for the translocation of the substrate across the membrane.</text>
</comment>
<comment type="subunit">
    <text evidence="1">The complex is composed of two ATP-binding proteins (MalK), two transmembrane proteins (MalG and MalF) and a solute-binding protein (MalE).</text>
</comment>
<comment type="subcellular location">
    <subcellularLocation>
        <location evidence="1">Cell inner membrane</location>
        <topology evidence="1">Multi-pass membrane protein</topology>
    </subcellularLocation>
</comment>
<comment type="similarity">
    <text evidence="4">Belongs to the binding-protein-dependent transport system permease family. MalFG subfamily.</text>
</comment>
<feature type="chain" id="PRO_0000060087" description="Maltose/maltodextrin transport system permease protein MalG">
    <location>
        <begin position="1"/>
        <end position="296"/>
    </location>
</feature>
<feature type="topological domain" description="Cytoplasmic" evidence="2">
    <location>
        <begin position="1"/>
        <end position="12"/>
    </location>
</feature>
<feature type="transmembrane region" description="Helical" evidence="3">
    <location>
        <begin position="13"/>
        <end position="35"/>
    </location>
</feature>
<feature type="topological domain" description="Periplasmic" evidence="2">
    <location>
        <begin position="36"/>
        <end position="88"/>
    </location>
</feature>
<feature type="transmembrane region" description="Helical" evidence="3">
    <location>
        <begin position="89"/>
        <end position="111"/>
    </location>
</feature>
<feature type="topological domain" description="Cytoplasmic" evidence="2">
    <location>
        <begin position="112"/>
        <end position="123"/>
    </location>
</feature>
<feature type="transmembrane region" description="Helical" evidence="3">
    <location>
        <begin position="124"/>
        <end position="143"/>
    </location>
</feature>
<feature type="topological domain" description="Periplasmic" evidence="2">
    <location>
        <begin position="144"/>
        <end position="152"/>
    </location>
</feature>
<feature type="transmembrane region" description="Helical" evidence="3">
    <location>
        <begin position="153"/>
        <end position="175"/>
    </location>
</feature>
<feature type="topological domain" description="Cytoplasmic" evidence="2">
    <location>
        <begin position="176"/>
        <end position="204"/>
    </location>
</feature>
<feature type="transmembrane region" description="Helical" evidence="3">
    <location>
        <begin position="205"/>
        <end position="227"/>
    </location>
</feature>
<feature type="topological domain" description="Periplasmic" evidence="2">
    <location>
        <begin position="228"/>
        <end position="257"/>
    </location>
</feature>
<feature type="transmembrane region" description="Helical" evidence="3">
    <location>
        <begin position="258"/>
        <end position="280"/>
    </location>
</feature>
<feature type="topological domain" description="Cytoplasmic" evidence="2">
    <location>
        <begin position="281"/>
        <end position="296"/>
    </location>
</feature>
<feature type="domain" description="ABC transmembrane type-1" evidence="3">
    <location>
        <begin position="85"/>
        <end position="281"/>
    </location>
</feature>
<protein>
    <recommendedName>
        <fullName evidence="1">Maltose/maltodextrin transport system permease protein MalG</fullName>
    </recommendedName>
</protein>
<gene>
    <name type="primary">malG</name>
    <name type="ordered locus">STM4227</name>
</gene>